<comment type="function">
    <text evidence="1">NDH shuttles electrons from NAD(P)H:plastoquinone, via FMN and iron-sulfur (Fe-S) centers, to quinones in the photosynthetic chain and possibly in a chloroplast respiratory chain. The immediate electron acceptor for the enzyme in this species is believed to be plastoquinone. Couples the redox reaction to proton translocation, and thus conserves the redox energy in a proton gradient.</text>
</comment>
<comment type="catalytic activity">
    <reaction evidence="1">
        <text>a plastoquinone + NADH + (n+1) H(+)(in) = a plastoquinol + NAD(+) + n H(+)(out)</text>
        <dbReference type="Rhea" id="RHEA:42608"/>
        <dbReference type="Rhea" id="RHEA-COMP:9561"/>
        <dbReference type="Rhea" id="RHEA-COMP:9562"/>
        <dbReference type="ChEBI" id="CHEBI:15378"/>
        <dbReference type="ChEBI" id="CHEBI:17757"/>
        <dbReference type="ChEBI" id="CHEBI:57540"/>
        <dbReference type="ChEBI" id="CHEBI:57945"/>
        <dbReference type="ChEBI" id="CHEBI:62192"/>
    </reaction>
</comment>
<comment type="catalytic activity">
    <reaction evidence="1">
        <text>a plastoquinone + NADPH + (n+1) H(+)(in) = a plastoquinol + NADP(+) + n H(+)(out)</text>
        <dbReference type="Rhea" id="RHEA:42612"/>
        <dbReference type="Rhea" id="RHEA-COMP:9561"/>
        <dbReference type="Rhea" id="RHEA-COMP:9562"/>
        <dbReference type="ChEBI" id="CHEBI:15378"/>
        <dbReference type="ChEBI" id="CHEBI:17757"/>
        <dbReference type="ChEBI" id="CHEBI:57783"/>
        <dbReference type="ChEBI" id="CHEBI:58349"/>
        <dbReference type="ChEBI" id="CHEBI:62192"/>
    </reaction>
</comment>
<comment type="subunit">
    <text evidence="1">NDH is composed of at least 16 different subunits, 5 of which are encoded in the nucleus.</text>
</comment>
<comment type="subcellular location">
    <subcellularLocation>
        <location evidence="1">Plastid</location>
        <location evidence="1">Chloroplast thylakoid membrane</location>
        <topology evidence="1">Multi-pass membrane protein</topology>
    </subcellularLocation>
</comment>
<comment type="similarity">
    <text evidence="1">Belongs to the complex I subunit 2 family.</text>
</comment>
<feature type="chain" id="PRO_0000225344" description="NAD(P)H-quinone oxidoreductase subunit 2 A, chloroplastic">
    <location>
        <begin position="1"/>
        <end position="510"/>
    </location>
</feature>
<feature type="transmembrane region" description="Helical" evidence="1">
    <location>
        <begin position="24"/>
        <end position="44"/>
    </location>
</feature>
<feature type="transmembrane region" description="Helical" evidence="1">
    <location>
        <begin position="57"/>
        <end position="77"/>
    </location>
</feature>
<feature type="transmembrane region" description="Helical" evidence="1">
    <location>
        <begin position="99"/>
        <end position="119"/>
    </location>
</feature>
<feature type="transmembrane region" description="Helical" evidence="1">
    <location>
        <begin position="124"/>
        <end position="144"/>
    </location>
</feature>
<feature type="transmembrane region" description="Helical" evidence="1">
    <location>
        <begin position="149"/>
        <end position="169"/>
    </location>
</feature>
<feature type="transmembrane region" description="Helical" evidence="1">
    <location>
        <begin position="183"/>
        <end position="203"/>
    </location>
</feature>
<feature type="transmembrane region" description="Helical" evidence="1">
    <location>
        <begin position="227"/>
        <end position="247"/>
    </location>
</feature>
<feature type="transmembrane region" description="Helical" evidence="1">
    <location>
        <begin position="295"/>
        <end position="315"/>
    </location>
</feature>
<feature type="transmembrane region" description="Helical" evidence="1">
    <location>
        <begin position="323"/>
        <end position="343"/>
    </location>
</feature>
<feature type="transmembrane region" description="Helical" evidence="1">
    <location>
        <begin position="354"/>
        <end position="374"/>
    </location>
</feature>
<feature type="transmembrane region" description="Helical" evidence="1">
    <location>
        <begin position="395"/>
        <end position="415"/>
    </location>
</feature>
<feature type="transmembrane region" description="Helical" evidence="1">
    <location>
        <begin position="428"/>
        <end position="448"/>
    </location>
</feature>
<feature type="transmembrane region" description="Helical" evidence="1">
    <location>
        <begin position="484"/>
        <end position="504"/>
    </location>
</feature>
<sequence length="510" mass="56665">MIWHVQNENLILDSTRIFMKAFHLLLFDGSFIFPECILIFGLILLLMIDSTSDQKDIPWFYFISSTSLVMSITALLFRWREEPMIIFSGNFQTNNFNEIFQFLILLCSTLCIPLSVEYIECTEMAITEFLLFVLTATLGGMFLCGANDLITIFVAPECFSLCSYLLSGYTKKDVRSNEATMKYLLMGGASSSILVHGFSWLYGSSGGEIELQEIVNGLINTQMYNSPGILIALLFITVGIGFKLSLAPSHQWTPDVYEGSPTPVVAFLSVTSKVAASASATRIFDIPFYFSSNEWHLLLEILAILSMILGNLIAITQTSMKRMLAYSSIGQIGYVIIGIIVGDSNGGYASMITYMLFYISMNLGTFACIVLFGLRTGTDNIRDYAGLYTKDPFLALSLALCLLSLGGLPPLAGFFGKLHLFWCGWQAGLYFLVSIGLLTSVISIYYYLKIIKLLMTGRNQEITPHVRNYRRSPLRSNNSIELSMIVCVIASTIPGISMNPIIAIAQDTLF</sequence>
<evidence type="ECO:0000255" key="1">
    <source>
        <dbReference type="HAMAP-Rule" id="MF_00445"/>
    </source>
</evidence>
<name>NU2C1_EUCGG</name>
<accession>P0CC60</accession>
<accession>Q49KT7</accession>
<gene>
    <name evidence="1" type="primary">ndhB1</name>
</gene>
<reference key="1">
    <citation type="journal article" date="2005" name="DNA Res.">
        <title>Complete nucleotide sequence of the chloroplast genome from the Tasmanian blue gum, Eucalyptus globulus (Myrtaceae).</title>
        <authorList>
            <person name="Steane D.A."/>
        </authorList>
    </citation>
    <scope>NUCLEOTIDE SEQUENCE [LARGE SCALE GENOMIC DNA]</scope>
</reference>
<geneLocation type="chloroplast"/>
<proteinExistence type="inferred from homology"/>
<keyword id="KW-0150">Chloroplast</keyword>
<keyword id="KW-0472">Membrane</keyword>
<keyword id="KW-0520">NAD</keyword>
<keyword id="KW-0521">NADP</keyword>
<keyword id="KW-0934">Plastid</keyword>
<keyword id="KW-0618">Plastoquinone</keyword>
<keyword id="KW-0874">Quinone</keyword>
<keyword id="KW-0793">Thylakoid</keyword>
<keyword id="KW-1278">Translocase</keyword>
<keyword id="KW-0812">Transmembrane</keyword>
<keyword id="KW-1133">Transmembrane helix</keyword>
<keyword id="KW-0813">Transport</keyword>
<protein>
    <recommendedName>
        <fullName evidence="1">NAD(P)H-quinone oxidoreductase subunit 2 A, chloroplastic</fullName>
        <ecNumber evidence="1">7.1.1.-</ecNumber>
    </recommendedName>
    <alternativeName>
        <fullName evidence="1">NAD(P)H dehydrogenase, subunit 2 A</fullName>
    </alternativeName>
    <alternativeName>
        <fullName evidence="1">NADH-plastoquinone oxidoreductase subunit 2 A</fullName>
    </alternativeName>
</protein>
<organism>
    <name type="scientific">Eucalyptus globulus subsp. globulus</name>
    <name type="common">Tasmanian blue gum</name>
    <dbReference type="NCBI Taxonomy" id="71271"/>
    <lineage>
        <taxon>Eukaryota</taxon>
        <taxon>Viridiplantae</taxon>
        <taxon>Streptophyta</taxon>
        <taxon>Embryophyta</taxon>
        <taxon>Tracheophyta</taxon>
        <taxon>Spermatophyta</taxon>
        <taxon>Magnoliopsida</taxon>
        <taxon>eudicotyledons</taxon>
        <taxon>Gunneridae</taxon>
        <taxon>Pentapetalae</taxon>
        <taxon>rosids</taxon>
        <taxon>malvids</taxon>
        <taxon>Myrtales</taxon>
        <taxon>Myrtaceae</taxon>
        <taxon>Myrtoideae</taxon>
        <taxon>Eucalypteae</taxon>
        <taxon>Eucalyptus</taxon>
    </lineage>
</organism>
<dbReference type="EC" id="7.1.1.-" evidence="1"/>
<dbReference type="EMBL" id="AY780259">
    <property type="protein sequence ID" value="AAX21090.1"/>
    <property type="molecule type" value="Genomic_DNA"/>
</dbReference>
<dbReference type="SMR" id="P0CC60"/>
<dbReference type="GO" id="GO:0009535">
    <property type="term" value="C:chloroplast thylakoid membrane"/>
    <property type="evidence" value="ECO:0007669"/>
    <property type="project" value="UniProtKB-SubCell"/>
</dbReference>
<dbReference type="GO" id="GO:0008137">
    <property type="term" value="F:NADH dehydrogenase (ubiquinone) activity"/>
    <property type="evidence" value="ECO:0007669"/>
    <property type="project" value="InterPro"/>
</dbReference>
<dbReference type="GO" id="GO:0048038">
    <property type="term" value="F:quinone binding"/>
    <property type="evidence" value="ECO:0007669"/>
    <property type="project" value="UniProtKB-KW"/>
</dbReference>
<dbReference type="GO" id="GO:0042773">
    <property type="term" value="P:ATP synthesis coupled electron transport"/>
    <property type="evidence" value="ECO:0007669"/>
    <property type="project" value="InterPro"/>
</dbReference>
<dbReference type="GO" id="GO:0019684">
    <property type="term" value="P:photosynthesis, light reaction"/>
    <property type="evidence" value="ECO:0007669"/>
    <property type="project" value="UniProtKB-UniRule"/>
</dbReference>
<dbReference type="HAMAP" id="MF_00445">
    <property type="entry name" value="NDH1_NuoN_1"/>
    <property type="match status" value="1"/>
</dbReference>
<dbReference type="InterPro" id="IPR010096">
    <property type="entry name" value="NADH-Q_OxRdtase_suN/2"/>
</dbReference>
<dbReference type="InterPro" id="IPR001750">
    <property type="entry name" value="ND/Mrp_TM"/>
</dbReference>
<dbReference type="InterPro" id="IPR045693">
    <property type="entry name" value="Ndh2_N"/>
</dbReference>
<dbReference type="NCBIfam" id="TIGR01770">
    <property type="entry name" value="NDH_I_N"/>
    <property type="match status" value="1"/>
</dbReference>
<dbReference type="NCBIfam" id="NF002701">
    <property type="entry name" value="PRK02504.1"/>
    <property type="match status" value="1"/>
</dbReference>
<dbReference type="PANTHER" id="PTHR22773">
    <property type="entry name" value="NADH DEHYDROGENASE"/>
    <property type="match status" value="1"/>
</dbReference>
<dbReference type="Pfam" id="PF19530">
    <property type="entry name" value="Ndh2_N"/>
    <property type="match status" value="1"/>
</dbReference>
<dbReference type="Pfam" id="PF00361">
    <property type="entry name" value="Proton_antipo_M"/>
    <property type="match status" value="1"/>
</dbReference>
<dbReference type="PRINTS" id="PR01434">
    <property type="entry name" value="NADHDHGNASE5"/>
</dbReference>